<comment type="function">
    <text evidence="1">Catalyzes the transfer of the diacylglyceryl group from phosphatidylglycerol to the sulfhydryl group of the N-terminal cysteine of a prolipoprotein, the first step in the formation of mature lipoproteins.</text>
</comment>
<comment type="catalytic activity">
    <reaction evidence="1">
        <text>L-cysteinyl-[prolipoprotein] + a 1,2-diacyl-sn-glycero-3-phospho-(1'-sn-glycerol) = an S-1,2-diacyl-sn-glyceryl-L-cysteinyl-[prolipoprotein] + sn-glycerol 1-phosphate + H(+)</text>
        <dbReference type="Rhea" id="RHEA:56712"/>
        <dbReference type="Rhea" id="RHEA-COMP:14679"/>
        <dbReference type="Rhea" id="RHEA-COMP:14680"/>
        <dbReference type="ChEBI" id="CHEBI:15378"/>
        <dbReference type="ChEBI" id="CHEBI:29950"/>
        <dbReference type="ChEBI" id="CHEBI:57685"/>
        <dbReference type="ChEBI" id="CHEBI:64716"/>
        <dbReference type="ChEBI" id="CHEBI:140658"/>
        <dbReference type="EC" id="2.5.1.145"/>
    </reaction>
</comment>
<comment type="pathway">
    <text evidence="1">Protein modification; lipoprotein biosynthesis (diacylglyceryl transfer).</text>
</comment>
<comment type="subcellular location">
    <subcellularLocation>
        <location evidence="1">Cell inner membrane</location>
        <topology evidence="1">Multi-pass membrane protein</topology>
    </subcellularLocation>
</comment>
<comment type="similarity">
    <text evidence="1">Belongs to the Lgt family.</text>
</comment>
<proteinExistence type="inferred from homology"/>
<evidence type="ECO:0000255" key="1">
    <source>
        <dbReference type="HAMAP-Rule" id="MF_01147"/>
    </source>
</evidence>
<reference key="1">
    <citation type="journal article" date="2009" name="J. Bacteriol.">
        <title>Complete genome sequence of Haemophilus parasuis SH0165.</title>
        <authorList>
            <person name="Yue M."/>
            <person name="Yang F."/>
            <person name="Yang J."/>
            <person name="Bei W."/>
            <person name="Cai X."/>
            <person name="Chen L."/>
            <person name="Dong J."/>
            <person name="Zhou R."/>
            <person name="Jin M."/>
            <person name="Jin Q."/>
            <person name="Chen H."/>
        </authorList>
    </citation>
    <scope>NUCLEOTIDE SEQUENCE [LARGE SCALE GENOMIC DNA]</scope>
    <source>
        <strain>SH0165</strain>
    </source>
</reference>
<protein>
    <recommendedName>
        <fullName evidence="1">Phosphatidylglycerol--prolipoprotein diacylglyceryl transferase</fullName>
        <ecNumber evidence="1">2.5.1.145</ecNumber>
    </recommendedName>
</protein>
<keyword id="KW-0997">Cell inner membrane</keyword>
<keyword id="KW-1003">Cell membrane</keyword>
<keyword id="KW-0472">Membrane</keyword>
<keyword id="KW-1185">Reference proteome</keyword>
<keyword id="KW-0808">Transferase</keyword>
<keyword id="KW-0812">Transmembrane</keyword>
<keyword id="KW-1133">Transmembrane helix</keyword>
<organism>
    <name type="scientific">Glaesserella parasuis serovar 5 (strain SH0165)</name>
    <name type="common">Haemophilus parasuis</name>
    <dbReference type="NCBI Taxonomy" id="557723"/>
    <lineage>
        <taxon>Bacteria</taxon>
        <taxon>Pseudomonadati</taxon>
        <taxon>Pseudomonadota</taxon>
        <taxon>Gammaproteobacteria</taxon>
        <taxon>Pasteurellales</taxon>
        <taxon>Pasteurellaceae</taxon>
        <taxon>Glaesserella</taxon>
    </lineage>
</organism>
<dbReference type="EC" id="2.5.1.145" evidence="1"/>
<dbReference type="EMBL" id="CP001321">
    <property type="protein sequence ID" value="ACL33688.1"/>
    <property type="molecule type" value="Genomic_DNA"/>
</dbReference>
<dbReference type="RefSeq" id="WP_005710616.1">
    <property type="nucleotide sequence ID" value="NC_011852.1"/>
</dbReference>
<dbReference type="SMR" id="B8F8N6"/>
<dbReference type="STRING" id="557723.HAPS_2257"/>
<dbReference type="GeneID" id="66619698"/>
<dbReference type="KEGG" id="hap:HAPS_2257"/>
<dbReference type="HOGENOM" id="CLU_013386_1_0_6"/>
<dbReference type="UniPathway" id="UPA00664"/>
<dbReference type="Proteomes" id="UP000006743">
    <property type="component" value="Chromosome"/>
</dbReference>
<dbReference type="GO" id="GO:0005886">
    <property type="term" value="C:plasma membrane"/>
    <property type="evidence" value="ECO:0007669"/>
    <property type="project" value="UniProtKB-SubCell"/>
</dbReference>
<dbReference type="GO" id="GO:0008961">
    <property type="term" value="F:phosphatidylglycerol-prolipoprotein diacylglyceryl transferase activity"/>
    <property type="evidence" value="ECO:0007669"/>
    <property type="project" value="UniProtKB-UniRule"/>
</dbReference>
<dbReference type="GO" id="GO:0042158">
    <property type="term" value="P:lipoprotein biosynthetic process"/>
    <property type="evidence" value="ECO:0007669"/>
    <property type="project" value="UniProtKB-UniRule"/>
</dbReference>
<dbReference type="HAMAP" id="MF_01147">
    <property type="entry name" value="Lgt"/>
    <property type="match status" value="1"/>
</dbReference>
<dbReference type="InterPro" id="IPR001640">
    <property type="entry name" value="Lgt"/>
</dbReference>
<dbReference type="NCBIfam" id="TIGR00544">
    <property type="entry name" value="lgt"/>
    <property type="match status" value="1"/>
</dbReference>
<dbReference type="PANTHER" id="PTHR30589:SF0">
    <property type="entry name" value="PHOSPHATIDYLGLYCEROL--PROLIPOPROTEIN DIACYLGLYCERYL TRANSFERASE"/>
    <property type="match status" value="1"/>
</dbReference>
<dbReference type="PANTHER" id="PTHR30589">
    <property type="entry name" value="PROLIPOPROTEIN DIACYLGLYCERYL TRANSFERASE"/>
    <property type="match status" value="1"/>
</dbReference>
<dbReference type="Pfam" id="PF01790">
    <property type="entry name" value="LGT"/>
    <property type="match status" value="1"/>
</dbReference>
<dbReference type="PROSITE" id="PS01311">
    <property type="entry name" value="LGT"/>
    <property type="match status" value="1"/>
</dbReference>
<accession>B8F8N6</accession>
<feature type="chain" id="PRO_1000164139" description="Phosphatidylglycerol--prolipoprotein diacylglyceryl transferase">
    <location>
        <begin position="1"/>
        <end position="267"/>
    </location>
</feature>
<feature type="transmembrane region" description="Helical" evidence="1">
    <location>
        <begin position="21"/>
        <end position="41"/>
    </location>
</feature>
<feature type="transmembrane region" description="Helical" evidence="1">
    <location>
        <begin position="60"/>
        <end position="80"/>
    </location>
</feature>
<feature type="transmembrane region" description="Helical" evidence="1">
    <location>
        <begin position="95"/>
        <end position="115"/>
    </location>
</feature>
<feature type="transmembrane region" description="Helical" evidence="1">
    <location>
        <begin position="203"/>
        <end position="223"/>
    </location>
</feature>
<feature type="transmembrane region" description="Helical" evidence="1">
    <location>
        <begin position="240"/>
        <end position="260"/>
    </location>
</feature>
<feature type="binding site" evidence="1">
    <location>
        <position position="143"/>
    </location>
    <ligand>
        <name>a 1,2-diacyl-sn-glycero-3-phospho-(1'-sn-glycerol)</name>
        <dbReference type="ChEBI" id="CHEBI:64716"/>
    </ligand>
</feature>
<gene>
    <name evidence="1" type="primary">lgt</name>
    <name type="ordered locus">HAPS_2257</name>
</gene>
<sequence length="267" mass="30356">MSEQFLTFPNIDPVALQLGPVSLHWYGIMYLLGFGFAYWLGTKRAKNSNGVWSVEQVDQLLFNGFWGVVLGGRIGDVFFYSFDRFLQDPLYLFRIWEGGMSFHGGLLGVIVAMLWTSRRQNRNFWQTADFIAPLIPFGLGLGRIGNFINDELWGRVTDVPWAIMFPSGGYLPRHPSQLYEAVLEGLVLFFILNGYIRKPRPTGSVAGLFLVGYGVFRFIVEYFREFDPNVNTAADLITRGQLLSLPMIIGGLVIMVVAYYRHRLSND</sequence>
<name>LGT_GLAP5</name>